<organism>
    <name type="scientific">Escherichia coli O17:K52:H18 (strain UMN026 / ExPEC)</name>
    <dbReference type="NCBI Taxonomy" id="585056"/>
    <lineage>
        <taxon>Bacteria</taxon>
        <taxon>Pseudomonadati</taxon>
        <taxon>Pseudomonadota</taxon>
        <taxon>Gammaproteobacteria</taxon>
        <taxon>Enterobacterales</taxon>
        <taxon>Enterobacteriaceae</taxon>
        <taxon>Escherichia</taxon>
    </lineage>
</organism>
<name>NADE_ECOLU</name>
<evidence type="ECO:0000255" key="1">
    <source>
        <dbReference type="HAMAP-Rule" id="MF_00193"/>
    </source>
</evidence>
<gene>
    <name evidence="1" type="primary">nadE</name>
    <name type="ordered locus">ECUMN_2029</name>
</gene>
<proteinExistence type="inferred from homology"/>
<protein>
    <recommendedName>
        <fullName evidence="1">NH(3)-dependent NAD(+) synthetase</fullName>
        <ecNumber evidence="1">6.3.1.5</ecNumber>
    </recommendedName>
</protein>
<comment type="function">
    <text evidence="1">Catalyzes the ATP-dependent amidation of deamido-NAD to form NAD. Uses ammonia as a nitrogen source.</text>
</comment>
<comment type="catalytic activity">
    <reaction evidence="1">
        <text>deamido-NAD(+) + NH4(+) + ATP = AMP + diphosphate + NAD(+) + H(+)</text>
        <dbReference type="Rhea" id="RHEA:21188"/>
        <dbReference type="ChEBI" id="CHEBI:15378"/>
        <dbReference type="ChEBI" id="CHEBI:28938"/>
        <dbReference type="ChEBI" id="CHEBI:30616"/>
        <dbReference type="ChEBI" id="CHEBI:33019"/>
        <dbReference type="ChEBI" id="CHEBI:57540"/>
        <dbReference type="ChEBI" id="CHEBI:58437"/>
        <dbReference type="ChEBI" id="CHEBI:456215"/>
        <dbReference type="EC" id="6.3.1.5"/>
    </reaction>
</comment>
<comment type="pathway">
    <text evidence="1">Cofactor biosynthesis; NAD(+) biosynthesis; NAD(+) from deamido-NAD(+) (ammonia route): step 1/1.</text>
</comment>
<comment type="subunit">
    <text evidence="1">Homodimer.</text>
</comment>
<comment type="similarity">
    <text evidence="1">Belongs to the NAD synthetase family.</text>
</comment>
<reference key="1">
    <citation type="journal article" date="2009" name="PLoS Genet.">
        <title>Organised genome dynamics in the Escherichia coli species results in highly diverse adaptive paths.</title>
        <authorList>
            <person name="Touchon M."/>
            <person name="Hoede C."/>
            <person name="Tenaillon O."/>
            <person name="Barbe V."/>
            <person name="Baeriswyl S."/>
            <person name="Bidet P."/>
            <person name="Bingen E."/>
            <person name="Bonacorsi S."/>
            <person name="Bouchier C."/>
            <person name="Bouvet O."/>
            <person name="Calteau A."/>
            <person name="Chiapello H."/>
            <person name="Clermont O."/>
            <person name="Cruveiller S."/>
            <person name="Danchin A."/>
            <person name="Diard M."/>
            <person name="Dossat C."/>
            <person name="Karoui M.E."/>
            <person name="Frapy E."/>
            <person name="Garry L."/>
            <person name="Ghigo J.M."/>
            <person name="Gilles A.M."/>
            <person name="Johnson J."/>
            <person name="Le Bouguenec C."/>
            <person name="Lescat M."/>
            <person name="Mangenot S."/>
            <person name="Martinez-Jehanne V."/>
            <person name="Matic I."/>
            <person name="Nassif X."/>
            <person name="Oztas S."/>
            <person name="Petit M.A."/>
            <person name="Pichon C."/>
            <person name="Rouy Z."/>
            <person name="Ruf C.S."/>
            <person name="Schneider D."/>
            <person name="Tourret J."/>
            <person name="Vacherie B."/>
            <person name="Vallenet D."/>
            <person name="Medigue C."/>
            <person name="Rocha E.P.C."/>
            <person name="Denamur E."/>
        </authorList>
    </citation>
    <scope>NUCLEOTIDE SEQUENCE [LARGE SCALE GENOMIC DNA]</scope>
    <source>
        <strain>UMN026 / ExPEC</strain>
    </source>
</reference>
<keyword id="KW-0067">ATP-binding</keyword>
<keyword id="KW-0436">Ligase</keyword>
<keyword id="KW-0460">Magnesium</keyword>
<keyword id="KW-0479">Metal-binding</keyword>
<keyword id="KW-0520">NAD</keyword>
<keyword id="KW-0547">Nucleotide-binding</keyword>
<sequence>MTLQQQIIKALGAKPQINAEEEIRRSVDFLKSYLQTYPFIKSLVLGISGGQDSTLAGKLCQMAINELRQETGNESLQFIAVRLPYGVQADEQDCQDAIAFIQPDRVLTVNIKGAVLASEQALREAGIELSDFVRGNEKARERMKAQYSIAGMTSGVVVGTDHAAEAITGFFTKYGDGGTDINPLYRLNKRQGKQLLAALGCPEHLYKKAPTADLEDDRPSLPDEVALGVTYDNIDDYLEGKNLPEQVARTIENWYLKTEHKRRPPITVFDDFWKK</sequence>
<accession>B7N576</accession>
<dbReference type="EC" id="6.3.1.5" evidence="1"/>
<dbReference type="EMBL" id="CU928163">
    <property type="protein sequence ID" value="CAR13225.1"/>
    <property type="molecule type" value="Genomic_DNA"/>
</dbReference>
<dbReference type="RefSeq" id="WP_000175035.1">
    <property type="nucleotide sequence ID" value="NC_011751.1"/>
</dbReference>
<dbReference type="RefSeq" id="YP_002412757.1">
    <property type="nucleotide sequence ID" value="NC_011751.1"/>
</dbReference>
<dbReference type="SMR" id="B7N576"/>
<dbReference type="STRING" id="585056.ECUMN_2029"/>
<dbReference type="KEGG" id="eum:ECUMN_2029"/>
<dbReference type="PATRIC" id="fig|585056.7.peg.2215"/>
<dbReference type="HOGENOM" id="CLU_059327_3_0_6"/>
<dbReference type="UniPathway" id="UPA00253">
    <property type="reaction ID" value="UER00333"/>
</dbReference>
<dbReference type="Proteomes" id="UP000007097">
    <property type="component" value="Chromosome"/>
</dbReference>
<dbReference type="GO" id="GO:0005737">
    <property type="term" value="C:cytoplasm"/>
    <property type="evidence" value="ECO:0007669"/>
    <property type="project" value="InterPro"/>
</dbReference>
<dbReference type="GO" id="GO:0005524">
    <property type="term" value="F:ATP binding"/>
    <property type="evidence" value="ECO:0007669"/>
    <property type="project" value="UniProtKB-UniRule"/>
</dbReference>
<dbReference type="GO" id="GO:0004359">
    <property type="term" value="F:glutaminase activity"/>
    <property type="evidence" value="ECO:0007669"/>
    <property type="project" value="InterPro"/>
</dbReference>
<dbReference type="GO" id="GO:0046872">
    <property type="term" value="F:metal ion binding"/>
    <property type="evidence" value="ECO:0007669"/>
    <property type="project" value="UniProtKB-KW"/>
</dbReference>
<dbReference type="GO" id="GO:0003952">
    <property type="term" value="F:NAD+ synthase (glutamine-hydrolyzing) activity"/>
    <property type="evidence" value="ECO:0007669"/>
    <property type="project" value="InterPro"/>
</dbReference>
<dbReference type="GO" id="GO:0008795">
    <property type="term" value="F:NAD+ synthase activity"/>
    <property type="evidence" value="ECO:0007669"/>
    <property type="project" value="UniProtKB-UniRule"/>
</dbReference>
<dbReference type="GO" id="GO:0009435">
    <property type="term" value="P:NAD biosynthetic process"/>
    <property type="evidence" value="ECO:0007669"/>
    <property type="project" value="UniProtKB-UniRule"/>
</dbReference>
<dbReference type="CDD" id="cd00553">
    <property type="entry name" value="NAD_synthase"/>
    <property type="match status" value="1"/>
</dbReference>
<dbReference type="FunFam" id="3.40.50.620:FF:000015">
    <property type="entry name" value="NH(3)-dependent NAD(+) synthetase"/>
    <property type="match status" value="1"/>
</dbReference>
<dbReference type="Gene3D" id="3.40.50.620">
    <property type="entry name" value="HUPs"/>
    <property type="match status" value="1"/>
</dbReference>
<dbReference type="HAMAP" id="MF_00193">
    <property type="entry name" value="NadE_ammonia_dep"/>
    <property type="match status" value="1"/>
</dbReference>
<dbReference type="InterPro" id="IPR022310">
    <property type="entry name" value="NAD/GMP_synthase"/>
</dbReference>
<dbReference type="InterPro" id="IPR003694">
    <property type="entry name" value="NAD_synthase"/>
</dbReference>
<dbReference type="InterPro" id="IPR022926">
    <property type="entry name" value="NH(3)-dep_NAD(+)_synth"/>
</dbReference>
<dbReference type="InterPro" id="IPR014729">
    <property type="entry name" value="Rossmann-like_a/b/a_fold"/>
</dbReference>
<dbReference type="NCBIfam" id="TIGR00552">
    <property type="entry name" value="nadE"/>
    <property type="match status" value="1"/>
</dbReference>
<dbReference type="NCBIfam" id="NF001979">
    <property type="entry name" value="PRK00768.1"/>
    <property type="match status" value="1"/>
</dbReference>
<dbReference type="PANTHER" id="PTHR23090">
    <property type="entry name" value="NH 3 /GLUTAMINE-DEPENDENT NAD + SYNTHETASE"/>
    <property type="match status" value="1"/>
</dbReference>
<dbReference type="PANTHER" id="PTHR23090:SF7">
    <property type="entry name" value="NH(3)-DEPENDENT NAD(+) SYNTHETASE"/>
    <property type="match status" value="1"/>
</dbReference>
<dbReference type="Pfam" id="PF02540">
    <property type="entry name" value="NAD_synthase"/>
    <property type="match status" value="1"/>
</dbReference>
<dbReference type="SUPFAM" id="SSF52402">
    <property type="entry name" value="Adenine nucleotide alpha hydrolases-like"/>
    <property type="match status" value="1"/>
</dbReference>
<feature type="chain" id="PRO_1000118620" description="NH(3)-dependent NAD(+) synthetase">
    <location>
        <begin position="1"/>
        <end position="275"/>
    </location>
</feature>
<feature type="binding site" evidence="1">
    <location>
        <begin position="46"/>
        <end position="53"/>
    </location>
    <ligand>
        <name>ATP</name>
        <dbReference type="ChEBI" id="CHEBI:30616"/>
    </ligand>
</feature>
<feature type="binding site" evidence="1">
    <location>
        <position position="52"/>
    </location>
    <ligand>
        <name>Mg(2+)</name>
        <dbReference type="ChEBI" id="CHEBI:18420"/>
    </ligand>
</feature>
<feature type="binding site" evidence="1">
    <location>
        <position position="140"/>
    </location>
    <ligand>
        <name>deamido-NAD(+)</name>
        <dbReference type="ChEBI" id="CHEBI:58437"/>
    </ligand>
</feature>
<feature type="binding site" evidence="1">
    <location>
        <position position="160"/>
    </location>
    <ligand>
        <name>ATP</name>
        <dbReference type="ChEBI" id="CHEBI:30616"/>
    </ligand>
</feature>
<feature type="binding site" evidence="1">
    <location>
        <position position="165"/>
    </location>
    <ligand>
        <name>Mg(2+)</name>
        <dbReference type="ChEBI" id="CHEBI:18420"/>
    </ligand>
</feature>
<feature type="binding site" evidence="1">
    <location>
        <position position="173"/>
    </location>
    <ligand>
        <name>deamido-NAD(+)</name>
        <dbReference type="ChEBI" id="CHEBI:58437"/>
    </ligand>
</feature>
<feature type="binding site" evidence="1">
    <location>
        <position position="180"/>
    </location>
    <ligand>
        <name>deamido-NAD(+)</name>
        <dbReference type="ChEBI" id="CHEBI:58437"/>
    </ligand>
</feature>
<feature type="binding site" evidence="1">
    <location>
        <position position="189"/>
    </location>
    <ligand>
        <name>ATP</name>
        <dbReference type="ChEBI" id="CHEBI:30616"/>
    </ligand>
</feature>
<feature type="binding site" evidence="1">
    <location>
        <position position="211"/>
    </location>
    <ligand>
        <name>ATP</name>
        <dbReference type="ChEBI" id="CHEBI:30616"/>
    </ligand>
</feature>
<feature type="binding site" evidence="1">
    <location>
        <begin position="260"/>
        <end position="261"/>
    </location>
    <ligand>
        <name>deamido-NAD(+)</name>
        <dbReference type="ChEBI" id="CHEBI:58437"/>
    </ligand>
</feature>